<keyword id="KW-0067">ATP-binding</keyword>
<keyword id="KW-0547">Nucleotide-binding</keyword>
<keyword id="KW-1185">Reference proteome</keyword>
<keyword id="KW-0813">Transport</keyword>
<feature type="chain" id="PRO_0000093170" description="Uncharacterized ABC transporter ATP-binding protein YnjD">
    <location>
        <begin position="1"/>
        <end position="217"/>
    </location>
</feature>
<feature type="domain" description="ABC transporter" evidence="1">
    <location>
        <begin position="2"/>
        <end position="216"/>
    </location>
</feature>
<feature type="binding site" evidence="1">
    <location>
        <begin position="34"/>
        <end position="41"/>
    </location>
    <ligand>
        <name>ATP</name>
        <dbReference type="ChEBI" id="CHEBI:30616"/>
    </ligand>
</feature>
<proteinExistence type="inferred from homology"/>
<sequence>MLCVKNVSLRLPESRLLTNVNFTVDKGDIVTLMGPSGCGKSTLFSWMIGALAEQFSCTGELWLNEQRIDILPTAQRQIGILFQDALLFDQFSVGQNLLLALPATLKGNARRNAVNDALERSGLEGAFHQDPATLSGGQRARVALLRALLAQPKALLLDEPFSRLDVALRDNFRQWVFSEVRALAIPVVQVTHDLQDVPADSSVLDMAQWSENYNKLR</sequence>
<name>YNJD_ECOLI</name>
<gene>
    <name type="primary">ynjD</name>
    <name type="ordered locus">b1756</name>
    <name type="ordered locus">JW5286</name>
</gene>
<evidence type="ECO:0000255" key="1">
    <source>
        <dbReference type="PROSITE-ProRule" id="PRU00434"/>
    </source>
</evidence>
<evidence type="ECO:0000305" key="2"/>
<comment type="function">
    <text>Probably part of a binding-protein-dependent transport system YnjCD. Probably responsible for energy coupling to the transport system.</text>
</comment>
<comment type="similarity">
    <text evidence="2">Belongs to the ABC transporter superfamily.</text>
</comment>
<organism>
    <name type="scientific">Escherichia coli (strain K12)</name>
    <dbReference type="NCBI Taxonomy" id="83333"/>
    <lineage>
        <taxon>Bacteria</taxon>
        <taxon>Pseudomonadati</taxon>
        <taxon>Pseudomonadota</taxon>
        <taxon>Gammaproteobacteria</taxon>
        <taxon>Enterobacterales</taxon>
        <taxon>Enterobacteriaceae</taxon>
        <taxon>Escherichia</taxon>
    </lineage>
</organism>
<reference key="1">
    <citation type="journal article" date="1996" name="DNA Res.">
        <title>A 570-kb DNA sequence of the Escherichia coli K-12 genome corresponding to the 28.0-40.1 min region on the linkage map.</title>
        <authorList>
            <person name="Aiba H."/>
            <person name="Baba T."/>
            <person name="Fujita K."/>
            <person name="Hayashi K."/>
            <person name="Inada T."/>
            <person name="Isono K."/>
            <person name="Itoh T."/>
            <person name="Kasai H."/>
            <person name="Kashimoto K."/>
            <person name="Kimura S."/>
            <person name="Kitakawa M."/>
            <person name="Kitagawa M."/>
            <person name="Makino K."/>
            <person name="Miki T."/>
            <person name="Mizobuchi K."/>
            <person name="Mori H."/>
            <person name="Mori T."/>
            <person name="Motomura K."/>
            <person name="Nakade S."/>
            <person name="Nakamura Y."/>
            <person name="Nashimoto H."/>
            <person name="Nishio Y."/>
            <person name="Oshima T."/>
            <person name="Saito N."/>
            <person name="Sampei G."/>
            <person name="Seki Y."/>
            <person name="Sivasundaram S."/>
            <person name="Tagami H."/>
            <person name="Takeda J."/>
            <person name="Takemoto K."/>
            <person name="Takeuchi Y."/>
            <person name="Wada C."/>
            <person name="Yamamoto Y."/>
            <person name="Horiuchi T."/>
        </authorList>
    </citation>
    <scope>NUCLEOTIDE SEQUENCE [LARGE SCALE GENOMIC DNA]</scope>
    <source>
        <strain>K12 / W3110 / ATCC 27325 / DSM 5911</strain>
    </source>
</reference>
<reference key="2">
    <citation type="journal article" date="1997" name="Science">
        <title>The complete genome sequence of Escherichia coli K-12.</title>
        <authorList>
            <person name="Blattner F.R."/>
            <person name="Plunkett G. III"/>
            <person name="Bloch C.A."/>
            <person name="Perna N.T."/>
            <person name="Burland V."/>
            <person name="Riley M."/>
            <person name="Collado-Vides J."/>
            <person name="Glasner J.D."/>
            <person name="Rode C.K."/>
            <person name="Mayhew G.F."/>
            <person name="Gregor J."/>
            <person name="Davis N.W."/>
            <person name="Kirkpatrick H.A."/>
            <person name="Goeden M.A."/>
            <person name="Rose D.J."/>
            <person name="Mau B."/>
            <person name="Shao Y."/>
        </authorList>
    </citation>
    <scope>NUCLEOTIDE SEQUENCE [LARGE SCALE GENOMIC DNA]</scope>
    <source>
        <strain>K12 / MG1655 / ATCC 47076</strain>
    </source>
</reference>
<reference key="3">
    <citation type="journal article" date="2006" name="Mol. Syst. Biol.">
        <title>Highly accurate genome sequences of Escherichia coli K-12 strains MG1655 and W3110.</title>
        <authorList>
            <person name="Hayashi K."/>
            <person name="Morooka N."/>
            <person name="Yamamoto Y."/>
            <person name="Fujita K."/>
            <person name="Isono K."/>
            <person name="Choi S."/>
            <person name="Ohtsubo E."/>
            <person name="Baba T."/>
            <person name="Wanner B.L."/>
            <person name="Mori H."/>
            <person name="Horiuchi T."/>
        </authorList>
    </citation>
    <scope>NUCLEOTIDE SEQUENCE [LARGE SCALE GENOMIC DNA]</scope>
    <source>
        <strain>K12 / W3110 / ATCC 27325 / DSM 5911</strain>
    </source>
</reference>
<protein>
    <recommendedName>
        <fullName>Uncharacterized ABC transporter ATP-binding protein YnjD</fullName>
    </recommendedName>
</protein>
<accession>P76909</accession>
<accession>P76225</accession>
<dbReference type="EMBL" id="U00096">
    <property type="protein sequence ID" value="AAC74826.1"/>
    <property type="molecule type" value="Genomic_DNA"/>
</dbReference>
<dbReference type="EMBL" id="AP009048">
    <property type="protein sequence ID" value="BAA15547.2"/>
    <property type="molecule type" value="Genomic_DNA"/>
</dbReference>
<dbReference type="PIR" id="D64935">
    <property type="entry name" value="D64935"/>
</dbReference>
<dbReference type="RefSeq" id="NP_416270.1">
    <property type="nucleotide sequence ID" value="NC_000913.3"/>
</dbReference>
<dbReference type="RefSeq" id="WP_001300558.1">
    <property type="nucleotide sequence ID" value="NZ_SSZK01000001.1"/>
</dbReference>
<dbReference type="SMR" id="P76909"/>
<dbReference type="BioGRID" id="4262124">
    <property type="interactions" value="128"/>
</dbReference>
<dbReference type="ComplexPortal" id="CPX-4465">
    <property type="entry name" value="YnjBCD ABC transporter complex"/>
</dbReference>
<dbReference type="FunCoup" id="P76909">
    <property type="interactions" value="74"/>
</dbReference>
<dbReference type="STRING" id="511145.b1756"/>
<dbReference type="jPOST" id="P76909"/>
<dbReference type="PaxDb" id="511145-b1756"/>
<dbReference type="EnsemblBacteria" id="AAC74826">
    <property type="protein sequence ID" value="AAC74826"/>
    <property type="gene ID" value="b1756"/>
</dbReference>
<dbReference type="GeneID" id="944965"/>
<dbReference type="KEGG" id="ecj:JW5286"/>
<dbReference type="KEGG" id="eco:b1756"/>
<dbReference type="KEGG" id="ecoc:C3026_10025"/>
<dbReference type="PATRIC" id="fig|1411691.4.peg.499"/>
<dbReference type="EchoBASE" id="EB3762"/>
<dbReference type="eggNOG" id="COG4136">
    <property type="taxonomic scope" value="Bacteria"/>
</dbReference>
<dbReference type="HOGENOM" id="CLU_000604_1_22_6"/>
<dbReference type="InParanoid" id="P76909"/>
<dbReference type="OMA" id="ILTIMGP"/>
<dbReference type="OrthoDB" id="9802264at2"/>
<dbReference type="PhylomeDB" id="P76909"/>
<dbReference type="BioCyc" id="EcoCyc:YNJD-MONOMER"/>
<dbReference type="PRO" id="PR:P76909"/>
<dbReference type="Proteomes" id="UP000000625">
    <property type="component" value="Chromosome"/>
</dbReference>
<dbReference type="GO" id="GO:0043190">
    <property type="term" value="C:ATP-binding cassette (ABC) transporter complex"/>
    <property type="evidence" value="ECO:0000305"/>
    <property type="project" value="EcoCyc"/>
</dbReference>
<dbReference type="GO" id="GO:0055052">
    <property type="term" value="C:ATP-binding cassette (ABC) transporter complex, substrate-binding subunit-containing"/>
    <property type="evidence" value="ECO:0000303"/>
    <property type="project" value="ComplexPortal"/>
</dbReference>
<dbReference type="GO" id="GO:0016020">
    <property type="term" value="C:membrane"/>
    <property type="evidence" value="ECO:0000303"/>
    <property type="project" value="ComplexPortal"/>
</dbReference>
<dbReference type="GO" id="GO:0005524">
    <property type="term" value="F:ATP binding"/>
    <property type="evidence" value="ECO:0007669"/>
    <property type="project" value="UniProtKB-KW"/>
</dbReference>
<dbReference type="GO" id="GO:0016887">
    <property type="term" value="F:ATP hydrolysis activity"/>
    <property type="evidence" value="ECO:0007669"/>
    <property type="project" value="InterPro"/>
</dbReference>
<dbReference type="GO" id="GO:0055085">
    <property type="term" value="P:transmembrane transport"/>
    <property type="evidence" value="ECO:0000303"/>
    <property type="project" value="ComplexPortal"/>
</dbReference>
<dbReference type="Gene3D" id="3.40.50.300">
    <property type="entry name" value="P-loop containing nucleotide triphosphate hydrolases"/>
    <property type="match status" value="1"/>
</dbReference>
<dbReference type="InterPro" id="IPR003593">
    <property type="entry name" value="AAA+_ATPase"/>
</dbReference>
<dbReference type="InterPro" id="IPR050093">
    <property type="entry name" value="ABC_SmlMolc_Importer"/>
</dbReference>
<dbReference type="InterPro" id="IPR003439">
    <property type="entry name" value="ABC_transporter-like_ATP-bd"/>
</dbReference>
<dbReference type="InterPro" id="IPR017871">
    <property type="entry name" value="ABC_transporter-like_CS"/>
</dbReference>
<dbReference type="InterPro" id="IPR027417">
    <property type="entry name" value="P-loop_NTPase"/>
</dbReference>
<dbReference type="PANTHER" id="PTHR42781">
    <property type="entry name" value="SPERMIDINE/PUTRESCINE IMPORT ATP-BINDING PROTEIN POTA"/>
    <property type="match status" value="1"/>
</dbReference>
<dbReference type="PANTHER" id="PTHR42781:SF4">
    <property type="entry name" value="SPERMIDINE_PUTRESCINE IMPORT ATP-BINDING PROTEIN POTA"/>
    <property type="match status" value="1"/>
</dbReference>
<dbReference type="Pfam" id="PF00005">
    <property type="entry name" value="ABC_tran"/>
    <property type="match status" value="1"/>
</dbReference>
<dbReference type="SMART" id="SM00382">
    <property type="entry name" value="AAA"/>
    <property type="match status" value="1"/>
</dbReference>
<dbReference type="SUPFAM" id="SSF52540">
    <property type="entry name" value="P-loop containing nucleoside triphosphate hydrolases"/>
    <property type="match status" value="1"/>
</dbReference>
<dbReference type="PROSITE" id="PS00211">
    <property type="entry name" value="ABC_TRANSPORTER_1"/>
    <property type="match status" value="1"/>
</dbReference>
<dbReference type="PROSITE" id="PS50893">
    <property type="entry name" value="ABC_TRANSPORTER_2"/>
    <property type="match status" value="1"/>
</dbReference>